<gene>
    <name evidence="1" type="primary">macB</name>
    <name type="ordered locus">RB9611</name>
</gene>
<name>MACB_RHOBA</name>
<dbReference type="EC" id="7.6.2.-" evidence="1"/>
<dbReference type="EMBL" id="BX294149">
    <property type="protein sequence ID" value="CAD76362.1"/>
    <property type="molecule type" value="Genomic_DNA"/>
</dbReference>
<dbReference type="RefSeq" id="NP_868977.1">
    <property type="nucleotide sequence ID" value="NC_005027.1"/>
</dbReference>
<dbReference type="RefSeq" id="WP_011122387.1">
    <property type="nucleotide sequence ID" value="NC_005027.1"/>
</dbReference>
<dbReference type="SMR" id="Q7ULB5"/>
<dbReference type="FunCoup" id="Q7ULB5">
    <property type="interactions" value="193"/>
</dbReference>
<dbReference type="STRING" id="243090.RB9611"/>
<dbReference type="EnsemblBacteria" id="CAD76362">
    <property type="protein sequence ID" value="CAD76362"/>
    <property type="gene ID" value="RB9611"/>
</dbReference>
<dbReference type="KEGG" id="rba:RB9611"/>
<dbReference type="PATRIC" id="fig|243090.15.peg.4615"/>
<dbReference type="eggNOG" id="COG0577">
    <property type="taxonomic scope" value="Bacteria"/>
</dbReference>
<dbReference type="eggNOG" id="COG1136">
    <property type="taxonomic scope" value="Bacteria"/>
</dbReference>
<dbReference type="HOGENOM" id="CLU_000604_78_2_0"/>
<dbReference type="InParanoid" id="Q7ULB5"/>
<dbReference type="OrthoDB" id="9770099at2"/>
<dbReference type="Proteomes" id="UP000001025">
    <property type="component" value="Chromosome"/>
</dbReference>
<dbReference type="GO" id="GO:0005886">
    <property type="term" value="C:plasma membrane"/>
    <property type="evidence" value="ECO:0000318"/>
    <property type="project" value="GO_Central"/>
</dbReference>
<dbReference type="GO" id="GO:0005524">
    <property type="term" value="F:ATP binding"/>
    <property type="evidence" value="ECO:0007669"/>
    <property type="project" value="UniProtKB-KW"/>
</dbReference>
<dbReference type="GO" id="GO:0016887">
    <property type="term" value="F:ATP hydrolysis activity"/>
    <property type="evidence" value="ECO:0007669"/>
    <property type="project" value="InterPro"/>
</dbReference>
<dbReference type="GO" id="GO:0022857">
    <property type="term" value="F:transmembrane transporter activity"/>
    <property type="evidence" value="ECO:0000318"/>
    <property type="project" value="GO_Central"/>
</dbReference>
<dbReference type="GO" id="GO:0046677">
    <property type="term" value="P:response to antibiotic"/>
    <property type="evidence" value="ECO:0007669"/>
    <property type="project" value="UniProtKB-KW"/>
</dbReference>
<dbReference type="CDD" id="cd03255">
    <property type="entry name" value="ABC_MJ0796_LolCDE_FtsE"/>
    <property type="match status" value="1"/>
</dbReference>
<dbReference type="FunFam" id="3.40.50.300:FF:000032">
    <property type="entry name" value="Export ABC transporter ATP-binding protein"/>
    <property type="match status" value="1"/>
</dbReference>
<dbReference type="Gene3D" id="3.40.50.300">
    <property type="entry name" value="P-loop containing nucleotide triphosphate hydrolases"/>
    <property type="match status" value="1"/>
</dbReference>
<dbReference type="InterPro" id="IPR003593">
    <property type="entry name" value="AAA+_ATPase"/>
</dbReference>
<dbReference type="InterPro" id="IPR003838">
    <property type="entry name" value="ABC3_permease_C"/>
</dbReference>
<dbReference type="InterPro" id="IPR003439">
    <property type="entry name" value="ABC_transporter-like_ATP-bd"/>
</dbReference>
<dbReference type="InterPro" id="IPR017871">
    <property type="entry name" value="ABC_transporter-like_CS"/>
</dbReference>
<dbReference type="InterPro" id="IPR017911">
    <property type="entry name" value="MacB-like_ATP-bd"/>
</dbReference>
<dbReference type="InterPro" id="IPR025857">
    <property type="entry name" value="MacB_PCD"/>
</dbReference>
<dbReference type="InterPro" id="IPR050250">
    <property type="entry name" value="Macrolide_Exporter_MacB"/>
</dbReference>
<dbReference type="InterPro" id="IPR027417">
    <property type="entry name" value="P-loop_NTPase"/>
</dbReference>
<dbReference type="PANTHER" id="PTHR30572:SF4">
    <property type="entry name" value="ABC TRANSPORTER PERMEASE YTRF"/>
    <property type="match status" value="1"/>
</dbReference>
<dbReference type="PANTHER" id="PTHR30572">
    <property type="entry name" value="MEMBRANE COMPONENT OF TRANSPORTER-RELATED"/>
    <property type="match status" value="1"/>
</dbReference>
<dbReference type="Pfam" id="PF00005">
    <property type="entry name" value="ABC_tran"/>
    <property type="match status" value="1"/>
</dbReference>
<dbReference type="Pfam" id="PF02687">
    <property type="entry name" value="FtsX"/>
    <property type="match status" value="1"/>
</dbReference>
<dbReference type="Pfam" id="PF12704">
    <property type="entry name" value="MacB_PCD"/>
    <property type="match status" value="1"/>
</dbReference>
<dbReference type="SMART" id="SM00382">
    <property type="entry name" value="AAA"/>
    <property type="match status" value="1"/>
</dbReference>
<dbReference type="SUPFAM" id="SSF52540">
    <property type="entry name" value="P-loop containing nucleoside triphosphate hydrolases"/>
    <property type="match status" value="1"/>
</dbReference>
<dbReference type="PROSITE" id="PS00211">
    <property type="entry name" value="ABC_TRANSPORTER_1"/>
    <property type="match status" value="1"/>
</dbReference>
<dbReference type="PROSITE" id="PS50893">
    <property type="entry name" value="ABC_TRANSPORTER_2"/>
    <property type="match status" value="1"/>
</dbReference>
<dbReference type="PROSITE" id="PS51267">
    <property type="entry name" value="MACB"/>
    <property type="match status" value="1"/>
</dbReference>
<comment type="function">
    <text evidence="1">Non-canonical ABC transporter that contains transmembrane domains (TMD), which form a pore in the inner membrane, and an ATP-binding domain (NBD), which is responsible for energy generation. Confers resistance against macrolides.</text>
</comment>
<comment type="subunit">
    <text evidence="1">Homodimer.</text>
</comment>
<comment type="subcellular location">
    <subcellularLocation>
        <location evidence="1">Cell inner membrane</location>
        <topology evidence="1">Multi-pass membrane protein</topology>
    </subcellularLocation>
</comment>
<comment type="similarity">
    <text evidence="1">Belongs to the ABC transporter superfamily. Macrolide exporter (TC 3.A.1.122) family.</text>
</comment>
<sequence>MIQLYGLRKDYRVGDHDLPVLKGITLNIEAGEYVALMGSSGSGKTTLMNLLGSLDHPTDGDYHLAGIDVSSLTPLELAAFRSQHIGFVFQNFNLLPRATALDNVMLPTIYASDGRSRRECIEDATKLLESVGLGGRLDHMPNQLSGGERQRIAIARALMNRPKLLLADEPTGNLDTVTEQEILALFRQLNQEHGITLVVVTHDAEVAHEADRVVRMKDGLVAEDVRQRASTVDRSRLANSRAEPLREPASAWSLPATWNAIVVAVLALRRNALRTVLTMLGVIIGVASVISTMELSAGASTAIEETVASMGASMLTISPGKASSTSGRQRPIQIIPDDVVAVAEQCSAVKVAAPLVYSQVQLVRQNRRWSPNLALGTTSQYLAARNWDQLELGTPFTQEQVLDAAKVCILGKTVAHELFDSEYPIGEEIRVNGVPLRVVGVLTEKGGDVIGNDQDDIIIGPWTTFKLRVNSSTGATAQFSTFADQMPPMQLASTRRSTQREEIHQIYVEAESPDHVELARQQITQVLSRRHNVEPAGAYRINDITEVSKVVGQVVGGVSALGLVIAGVSLMVGGVGIMNIMLVSVTERTREIGLRMAVGANRSAILRQFLIEATVLCVVGGFIGIFAGHMWSVLVGRVIGWPTAMSIWAPIVAVTVAATVGIVFGYYPARTASRLNPIDALRYE</sequence>
<protein>
    <recommendedName>
        <fullName evidence="1">Macrolide export ATP-binding/permease protein MacB</fullName>
        <ecNumber evidence="1">7.6.2.-</ecNumber>
    </recommendedName>
</protein>
<reference key="1">
    <citation type="journal article" date="2003" name="Proc. Natl. Acad. Sci. U.S.A.">
        <title>Complete genome sequence of the marine planctomycete Pirellula sp. strain 1.</title>
        <authorList>
            <person name="Gloeckner F.O."/>
            <person name="Kube M."/>
            <person name="Bauer M."/>
            <person name="Teeling H."/>
            <person name="Lombardot T."/>
            <person name="Ludwig W."/>
            <person name="Gade D."/>
            <person name="Beck A."/>
            <person name="Borzym K."/>
            <person name="Heitmann K."/>
            <person name="Rabus R."/>
            <person name="Schlesner H."/>
            <person name="Amann R."/>
            <person name="Reinhardt R."/>
        </authorList>
    </citation>
    <scope>NUCLEOTIDE SEQUENCE [LARGE SCALE GENOMIC DNA]</scope>
    <source>
        <strain>DSM 10527 / NCIMB 13988 / SH1</strain>
    </source>
</reference>
<organism>
    <name type="scientific">Rhodopirellula baltica (strain DSM 10527 / NCIMB 13988 / SH1)</name>
    <dbReference type="NCBI Taxonomy" id="243090"/>
    <lineage>
        <taxon>Bacteria</taxon>
        <taxon>Pseudomonadati</taxon>
        <taxon>Planctomycetota</taxon>
        <taxon>Planctomycetia</taxon>
        <taxon>Pirellulales</taxon>
        <taxon>Pirellulaceae</taxon>
        <taxon>Rhodopirellula</taxon>
    </lineage>
</organism>
<feature type="chain" id="PRO_0000269970" description="Macrolide export ATP-binding/permease protein MacB">
    <location>
        <begin position="1"/>
        <end position="684"/>
    </location>
</feature>
<feature type="transmembrane region" description="Helical" evidence="1">
    <location>
        <begin position="248"/>
        <end position="268"/>
    </location>
</feature>
<feature type="transmembrane region" description="Helical" evidence="1">
    <location>
        <begin position="275"/>
        <end position="295"/>
    </location>
</feature>
<feature type="transmembrane region" description="Helical" evidence="1">
    <location>
        <begin position="563"/>
        <end position="583"/>
    </location>
</feature>
<feature type="transmembrane region" description="Helical" evidence="1">
    <location>
        <begin position="615"/>
        <end position="635"/>
    </location>
</feature>
<feature type="transmembrane region" description="Helical" evidence="1">
    <location>
        <begin position="644"/>
        <end position="664"/>
    </location>
</feature>
<feature type="domain" description="ABC transporter" evidence="1">
    <location>
        <begin position="2"/>
        <end position="243"/>
    </location>
</feature>
<feature type="binding site" evidence="1">
    <location>
        <begin position="38"/>
        <end position="45"/>
    </location>
    <ligand>
        <name>ATP</name>
        <dbReference type="ChEBI" id="CHEBI:30616"/>
    </ligand>
</feature>
<keyword id="KW-0046">Antibiotic resistance</keyword>
<keyword id="KW-0067">ATP-binding</keyword>
<keyword id="KW-0997">Cell inner membrane</keyword>
<keyword id="KW-1003">Cell membrane</keyword>
<keyword id="KW-0472">Membrane</keyword>
<keyword id="KW-0547">Nucleotide-binding</keyword>
<keyword id="KW-1185">Reference proteome</keyword>
<keyword id="KW-1278">Translocase</keyword>
<keyword id="KW-0812">Transmembrane</keyword>
<keyword id="KW-1133">Transmembrane helix</keyword>
<keyword id="KW-0813">Transport</keyword>
<proteinExistence type="inferred from homology"/>
<accession>Q7ULB5</accession>
<evidence type="ECO:0000255" key="1">
    <source>
        <dbReference type="HAMAP-Rule" id="MF_01720"/>
    </source>
</evidence>